<reference key="1">
    <citation type="submission" date="2008-02" db="EMBL/GenBank/DDBJ databases">
        <title>Complete sequence of Haemophilus somnus 2336.</title>
        <authorList>
            <consortium name="US DOE Joint Genome Institute"/>
            <person name="Siddaramappa S."/>
            <person name="Duncan A.J."/>
            <person name="Challacombe J.F."/>
            <person name="Rainey D."/>
            <person name="Gillaspy A.F."/>
            <person name="Carson M."/>
            <person name="Gipson J."/>
            <person name="Gipson M."/>
            <person name="Bruce D."/>
            <person name="Detter J.C."/>
            <person name="Han C.S."/>
            <person name="Land M."/>
            <person name="Tapia R."/>
            <person name="Thompson L.S."/>
            <person name="Orvis J."/>
            <person name="Zaitshik J."/>
            <person name="Barnes G."/>
            <person name="Brettin T.S."/>
            <person name="Dyer D.W."/>
            <person name="Inzana T.J."/>
        </authorList>
    </citation>
    <scope>NUCLEOTIDE SEQUENCE [LARGE SCALE GENOMIC DNA]</scope>
    <source>
        <strain>2336</strain>
    </source>
</reference>
<proteinExistence type="inferred from homology"/>
<accession>B0UUI5</accession>
<keyword id="KW-0963">Cytoplasm</keyword>
<keyword id="KW-0648">Protein biosynthesis</keyword>
<comment type="function">
    <text evidence="1">Responsible for the release of ribosomes from messenger RNA at the termination of protein biosynthesis. May increase the efficiency of translation by recycling ribosomes from one round of translation to another.</text>
</comment>
<comment type="subcellular location">
    <subcellularLocation>
        <location evidence="1">Cytoplasm</location>
    </subcellularLocation>
</comment>
<comment type="similarity">
    <text evidence="1">Belongs to the RRF family.</text>
</comment>
<organism>
    <name type="scientific">Histophilus somni (strain 2336)</name>
    <name type="common">Haemophilus somnus</name>
    <dbReference type="NCBI Taxonomy" id="228400"/>
    <lineage>
        <taxon>Bacteria</taxon>
        <taxon>Pseudomonadati</taxon>
        <taxon>Pseudomonadota</taxon>
        <taxon>Gammaproteobacteria</taxon>
        <taxon>Pasteurellales</taxon>
        <taxon>Pasteurellaceae</taxon>
        <taxon>Histophilus</taxon>
    </lineage>
</organism>
<dbReference type="EMBL" id="CP000947">
    <property type="protein sequence ID" value="ACA31212.1"/>
    <property type="molecule type" value="Genomic_DNA"/>
</dbReference>
<dbReference type="RefSeq" id="WP_011609140.1">
    <property type="nucleotide sequence ID" value="NC_010519.1"/>
</dbReference>
<dbReference type="SMR" id="B0UUI5"/>
<dbReference type="STRING" id="228400.HSM_1464"/>
<dbReference type="GeneID" id="31487762"/>
<dbReference type="KEGG" id="hsm:HSM_1464"/>
<dbReference type="HOGENOM" id="CLU_073981_2_0_6"/>
<dbReference type="GO" id="GO:0005829">
    <property type="term" value="C:cytosol"/>
    <property type="evidence" value="ECO:0007669"/>
    <property type="project" value="GOC"/>
</dbReference>
<dbReference type="GO" id="GO:0043023">
    <property type="term" value="F:ribosomal large subunit binding"/>
    <property type="evidence" value="ECO:0007669"/>
    <property type="project" value="TreeGrafter"/>
</dbReference>
<dbReference type="GO" id="GO:0002184">
    <property type="term" value="P:cytoplasmic translational termination"/>
    <property type="evidence" value="ECO:0007669"/>
    <property type="project" value="TreeGrafter"/>
</dbReference>
<dbReference type="CDD" id="cd00520">
    <property type="entry name" value="RRF"/>
    <property type="match status" value="1"/>
</dbReference>
<dbReference type="FunFam" id="1.10.132.20:FF:000001">
    <property type="entry name" value="Ribosome-recycling factor"/>
    <property type="match status" value="1"/>
</dbReference>
<dbReference type="FunFam" id="3.30.1360.40:FF:000001">
    <property type="entry name" value="Ribosome-recycling factor"/>
    <property type="match status" value="1"/>
</dbReference>
<dbReference type="Gene3D" id="3.30.1360.40">
    <property type="match status" value="1"/>
</dbReference>
<dbReference type="Gene3D" id="1.10.132.20">
    <property type="entry name" value="Ribosome-recycling factor"/>
    <property type="match status" value="1"/>
</dbReference>
<dbReference type="HAMAP" id="MF_00040">
    <property type="entry name" value="RRF"/>
    <property type="match status" value="1"/>
</dbReference>
<dbReference type="InterPro" id="IPR002661">
    <property type="entry name" value="Ribosome_recyc_fac"/>
</dbReference>
<dbReference type="InterPro" id="IPR023584">
    <property type="entry name" value="Ribosome_recyc_fac_dom"/>
</dbReference>
<dbReference type="InterPro" id="IPR036191">
    <property type="entry name" value="RRF_sf"/>
</dbReference>
<dbReference type="NCBIfam" id="TIGR00496">
    <property type="entry name" value="frr"/>
    <property type="match status" value="1"/>
</dbReference>
<dbReference type="PANTHER" id="PTHR20982:SF3">
    <property type="entry name" value="MITOCHONDRIAL RIBOSOME RECYCLING FACTOR PSEUDO 1"/>
    <property type="match status" value="1"/>
</dbReference>
<dbReference type="PANTHER" id="PTHR20982">
    <property type="entry name" value="RIBOSOME RECYCLING FACTOR"/>
    <property type="match status" value="1"/>
</dbReference>
<dbReference type="Pfam" id="PF01765">
    <property type="entry name" value="RRF"/>
    <property type="match status" value="1"/>
</dbReference>
<dbReference type="SUPFAM" id="SSF55194">
    <property type="entry name" value="Ribosome recycling factor, RRF"/>
    <property type="match status" value="1"/>
</dbReference>
<name>RRF_HISS2</name>
<gene>
    <name evidence="1" type="primary">frr</name>
    <name type="ordered locus">HSM_1464</name>
</gene>
<feature type="chain" id="PRO_1000074583" description="Ribosome-recycling factor">
    <location>
        <begin position="1"/>
        <end position="185"/>
    </location>
</feature>
<evidence type="ECO:0000255" key="1">
    <source>
        <dbReference type="HAMAP-Rule" id="MF_00040"/>
    </source>
</evidence>
<protein>
    <recommendedName>
        <fullName evidence="1">Ribosome-recycling factor</fullName>
        <shortName evidence="1">RRF</shortName>
    </recommendedName>
    <alternativeName>
        <fullName evidence="1">Ribosome-releasing factor</fullName>
    </alternativeName>
</protein>
<sequence length="185" mass="20875">MINEIKKDTQQRMEKSLETLRTHIAKIRTGRAQPSLLDGIQVEYYGSPTPLRQLANVVAEDARTLAVTVFDRSLISAVEKAILTSDLGLNPSSAGTTIRVPLPPLTEERRRDLIKIVKGEGEQGKIAIRNVRRDANDQIKALLKDKEISEDEERKAQDEIQKITDTFVKKVDEILADKEKELLDF</sequence>